<sequence>MSIPEVGKKIRVTVPSTTANLGPGFDCLGAALDLHNEFIFTRIEGGGDRFDLIMESTDGNHLRGGPENLVFRAAQKVWESANMEPFALEARVKLAVPPARGLGSSATAIVAGLIGANAIMNSPLPKEKLLELAIDIEGHPDNVVPSLLGGLCLTARSSSQRWRIIRCDWHDSIKAVVAIPAIRLSTSEARKVMPKNVPISDAVTNMGALTLLLNGLKAGNDELIKEGMFDKLHEPYRWKLIKGGLEVKDAALQAGALGCAISGAGPSILALCKKENGKEVSQAMVKAWEKSGVASRAPFLNLQTTGSQFSTISSR</sequence>
<feature type="chain" id="PRO_1000049159" description="Homoserine kinase">
    <location>
        <begin position="1"/>
        <end position="315"/>
    </location>
</feature>
<feature type="binding site" evidence="1">
    <location>
        <begin position="97"/>
        <end position="107"/>
    </location>
    <ligand>
        <name>ATP</name>
        <dbReference type="ChEBI" id="CHEBI:30616"/>
    </ligand>
</feature>
<organism>
    <name type="scientific">Prochlorococcus marinus (strain MIT 9312)</name>
    <dbReference type="NCBI Taxonomy" id="74546"/>
    <lineage>
        <taxon>Bacteria</taxon>
        <taxon>Bacillati</taxon>
        <taxon>Cyanobacteriota</taxon>
        <taxon>Cyanophyceae</taxon>
        <taxon>Synechococcales</taxon>
        <taxon>Prochlorococcaceae</taxon>
        <taxon>Prochlorococcus</taxon>
    </lineage>
</organism>
<keyword id="KW-0028">Amino-acid biosynthesis</keyword>
<keyword id="KW-0067">ATP-binding</keyword>
<keyword id="KW-0963">Cytoplasm</keyword>
<keyword id="KW-0418">Kinase</keyword>
<keyword id="KW-0547">Nucleotide-binding</keyword>
<keyword id="KW-0791">Threonine biosynthesis</keyword>
<keyword id="KW-0808">Transferase</keyword>
<evidence type="ECO:0000255" key="1">
    <source>
        <dbReference type="HAMAP-Rule" id="MF_00384"/>
    </source>
</evidence>
<name>KHSE_PROM9</name>
<proteinExistence type="inferred from homology"/>
<protein>
    <recommendedName>
        <fullName evidence="1">Homoserine kinase</fullName>
        <shortName evidence="1">HK</shortName>
        <shortName evidence="1">HSK</shortName>
        <ecNumber evidence="1">2.7.1.39</ecNumber>
    </recommendedName>
</protein>
<dbReference type="EC" id="2.7.1.39" evidence="1"/>
<dbReference type="EMBL" id="CP000111">
    <property type="protein sequence ID" value="ABB49656.1"/>
    <property type="molecule type" value="Genomic_DNA"/>
</dbReference>
<dbReference type="RefSeq" id="WP_011376151.1">
    <property type="nucleotide sequence ID" value="NC_007577.1"/>
</dbReference>
<dbReference type="SMR" id="Q31BT9"/>
<dbReference type="STRING" id="74546.PMT9312_0595"/>
<dbReference type="KEGG" id="pmi:PMT9312_0595"/>
<dbReference type="eggNOG" id="COG0083">
    <property type="taxonomic scope" value="Bacteria"/>
</dbReference>
<dbReference type="HOGENOM" id="CLU_041243_0_2_3"/>
<dbReference type="OrthoDB" id="9769912at2"/>
<dbReference type="UniPathway" id="UPA00050">
    <property type="reaction ID" value="UER00064"/>
</dbReference>
<dbReference type="Proteomes" id="UP000002715">
    <property type="component" value="Chromosome"/>
</dbReference>
<dbReference type="GO" id="GO:0005737">
    <property type="term" value="C:cytoplasm"/>
    <property type="evidence" value="ECO:0007669"/>
    <property type="project" value="UniProtKB-SubCell"/>
</dbReference>
<dbReference type="GO" id="GO:0005524">
    <property type="term" value="F:ATP binding"/>
    <property type="evidence" value="ECO:0007669"/>
    <property type="project" value="UniProtKB-UniRule"/>
</dbReference>
<dbReference type="GO" id="GO:0004413">
    <property type="term" value="F:homoserine kinase activity"/>
    <property type="evidence" value="ECO:0007669"/>
    <property type="project" value="UniProtKB-UniRule"/>
</dbReference>
<dbReference type="GO" id="GO:0009088">
    <property type="term" value="P:threonine biosynthetic process"/>
    <property type="evidence" value="ECO:0007669"/>
    <property type="project" value="UniProtKB-UniRule"/>
</dbReference>
<dbReference type="Gene3D" id="3.30.230.10">
    <property type="match status" value="1"/>
</dbReference>
<dbReference type="Gene3D" id="3.30.70.890">
    <property type="entry name" value="GHMP kinase, C-terminal domain"/>
    <property type="match status" value="1"/>
</dbReference>
<dbReference type="HAMAP" id="MF_00384">
    <property type="entry name" value="Homoser_kinase"/>
    <property type="match status" value="1"/>
</dbReference>
<dbReference type="InterPro" id="IPR013750">
    <property type="entry name" value="GHMP_kinase_C_dom"/>
</dbReference>
<dbReference type="InterPro" id="IPR036554">
    <property type="entry name" value="GHMP_kinase_C_sf"/>
</dbReference>
<dbReference type="InterPro" id="IPR006204">
    <property type="entry name" value="GHMP_kinase_N_dom"/>
</dbReference>
<dbReference type="InterPro" id="IPR006203">
    <property type="entry name" value="GHMP_knse_ATP-bd_CS"/>
</dbReference>
<dbReference type="InterPro" id="IPR000870">
    <property type="entry name" value="Homoserine_kinase"/>
</dbReference>
<dbReference type="InterPro" id="IPR020568">
    <property type="entry name" value="Ribosomal_Su5_D2-typ_SF"/>
</dbReference>
<dbReference type="InterPro" id="IPR014721">
    <property type="entry name" value="Ribsml_uS5_D2-typ_fold_subgr"/>
</dbReference>
<dbReference type="NCBIfam" id="NF002288">
    <property type="entry name" value="PRK01212.1-4"/>
    <property type="match status" value="1"/>
</dbReference>
<dbReference type="NCBIfam" id="TIGR00191">
    <property type="entry name" value="thrB"/>
    <property type="match status" value="1"/>
</dbReference>
<dbReference type="PANTHER" id="PTHR20861:SF1">
    <property type="entry name" value="HOMOSERINE KINASE"/>
    <property type="match status" value="1"/>
</dbReference>
<dbReference type="PANTHER" id="PTHR20861">
    <property type="entry name" value="HOMOSERINE/4-DIPHOSPHOCYTIDYL-2-C-METHYL-D-ERYTHRITOL KINASE"/>
    <property type="match status" value="1"/>
</dbReference>
<dbReference type="Pfam" id="PF08544">
    <property type="entry name" value="GHMP_kinases_C"/>
    <property type="match status" value="1"/>
</dbReference>
<dbReference type="Pfam" id="PF00288">
    <property type="entry name" value="GHMP_kinases_N"/>
    <property type="match status" value="1"/>
</dbReference>
<dbReference type="PIRSF" id="PIRSF000676">
    <property type="entry name" value="Homoser_kin"/>
    <property type="match status" value="1"/>
</dbReference>
<dbReference type="PRINTS" id="PR00958">
    <property type="entry name" value="HOMSERKINASE"/>
</dbReference>
<dbReference type="SUPFAM" id="SSF55060">
    <property type="entry name" value="GHMP Kinase, C-terminal domain"/>
    <property type="match status" value="1"/>
</dbReference>
<dbReference type="SUPFAM" id="SSF54211">
    <property type="entry name" value="Ribosomal protein S5 domain 2-like"/>
    <property type="match status" value="1"/>
</dbReference>
<dbReference type="PROSITE" id="PS00627">
    <property type="entry name" value="GHMP_KINASES_ATP"/>
    <property type="match status" value="1"/>
</dbReference>
<gene>
    <name evidence="1" type="primary">thrB</name>
    <name type="ordered locus">PMT9312_0595</name>
</gene>
<reference key="1">
    <citation type="journal article" date="2006" name="Science">
        <title>Genomic islands and the ecology and evolution of Prochlorococcus.</title>
        <authorList>
            <person name="Coleman M.L."/>
            <person name="Sullivan M.B."/>
            <person name="Martiny A.C."/>
            <person name="Steglich C."/>
            <person name="Barry K."/>
            <person name="Delong E.F."/>
            <person name="Chisholm S.W."/>
        </authorList>
    </citation>
    <scope>NUCLEOTIDE SEQUENCE [LARGE SCALE GENOMIC DNA]</scope>
    <source>
        <strain>MIT 9312</strain>
    </source>
</reference>
<accession>Q31BT9</accession>
<comment type="function">
    <text evidence="1">Catalyzes the ATP-dependent phosphorylation of L-homoserine to L-homoserine phosphate.</text>
</comment>
<comment type="catalytic activity">
    <reaction evidence="1">
        <text>L-homoserine + ATP = O-phospho-L-homoserine + ADP + H(+)</text>
        <dbReference type="Rhea" id="RHEA:13985"/>
        <dbReference type="ChEBI" id="CHEBI:15378"/>
        <dbReference type="ChEBI" id="CHEBI:30616"/>
        <dbReference type="ChEBI" id="CHEBI:57476"/>
        <dbReference type="ChEBI" id="CHEBI:57590"/>
        <dbReference type="ChEBI" id="CHEBI:456216"/>
        <dbReference type="EC" id="2.7.1.39"/>
    </reaction>
</comment>
<comment type="pathway">
    <text evidence="1">Amino-acid biosynthesis; L-threonine biosynthesis; L-threonine from L-aspartate: step 4/5.</text>
</comment>
<comment type="subcellular location">
    <subcellularLocation>
        <location evidence="1">Cytoplasm</location>
    </subcellularLocation>
</comment>
<comment type="similarity">
    <text evidence="1">Belongs to the GHMP kinase family. Homoserine kinase subfamily.</text>
</comment>